<dbReference type="EC" id="5.1.1.3" evidence="1"/>
<dbReference type="EMBL" id="CP001080">
    <property type="protein sequence ID" value="ACD66608.1"/>
    <property type="molecule type" value="Genomic_DNA"/>
</dbReference>
<dbReference type="RefSeq" id="WP_012459678.1">
    <property type="nucleotide sequence ID" value="NC_010730.1"/>
</dbReference>
<dbReference type="SMR" id="B2V9I5"/>
<dbReference type="STRING" id="436114.SYO3AOP1_0987"/>
<dbReference type="KEGG" id="sul:SYO3AOP1_0987"/>
<dbReference type="eggNOG" id="COG0796">
    <property type="taxonomic scope" value="Bacteria"/>
</dbReference>
<dbReference type="HOGENOM" id="CLU_052344_0_2_0"/>
<dbReference type="UniPathway" id="UPA00219"/>
<dbReference type="GO" id="GO:0008881">
    <property type="term" value="F:glutamate racemase activity"/>
    <property type="evidence" value="ECO:0007669"/>
    <property type="project" value="UniProtKB-UniRule"/>
</dbReference>
<dbReference type="GO" id="GO:0071555">
    <property type="term" value="P:cell wall organization"/>
    <property type="evidence" value="ECO:0007669"/>
    <property type="project" value="UniProtKB-KW"/>
</dbReference>
<dbReference type="GO" id="GO:0009252">
    <property type="term" value="P:peptidoglycan biosynthetic process"/>
    <property type="evidence" value="ECO:0007669"/>
    <property type="project" value="UniProtKB-UniRule"/>
</dbReference>
<dbReference type="GO" id="GO:0008360">
    <property type="term" value="P:regulation of cell shape"/>
    <property type="evidence" value="ECO:0007669"/>
    <property type="project" value="UniProtKB-KW"/>
</dbReference>
<dbReference type="FunFam" id="3.40.50.1860:FF:000001">
    <property type="entry name" value="Glutamate racemase"/>
    <property type="match status" value="1"/>
</dbReference>
<dbReference type="Gene3D" id="3.40.50.1860">
    <property type="match status" value="2"/>
</dbReference>
<dbReference type="HAMAP" id="MF_00258">
    <property type="entry name" value="Glu_racemase"/>
    <property type="match status" value="1"/>
</dbReference>
<dbReference type="InterPro" id="IPR015942">
    <property type="entry name" value="Asp/Glu/hydantoin_racemase"/>
</dbReference>
<dbReference type="InterPro" id="IPR001920">
    <property type="entry name" value="Asp/Glu_race"/>
</dbReference>
<dbReference type="InterPro" id="IPR018187">
    <property type="entry name" value="Asp/Glu_racemase_AS_1"/>
</dbReference>
<dbReference type="InterPro" id="IPR033134">
    <property type="entry name" value="Asp/Glu_racemase_AS_2"/>
</dbReference>
<dbReference type="InterPro" id="IPR004391">
    <property type="entry name" value="Glu_race"/>
</dbReference>
<dbReference type="NCBIfam" id="TIGR00067">
    <property type="entry name" value="glut_race"/>
    <property type="match status" value="1"/>
</dbReference>
<dbReference type="PANTHER" id="PTHR21198">
    <property type="entry name" value="GLUTAMATE RACEMASE"/>
    <property type="match status" value="1"/>
</dbReference>
<dbReference type="PANTHER" id="PTHR21198:SF2">
    <property type="entry name" value="GLUTAMATE RACEMASE"/>
    <property type="match status" value="1"/>
</dbReference>
<dbReference type="Pfam" id="PF01177">
    <property type="entry name" value="Asp_Glu_race"/>
    <property type="match status" value="1"/>
</dbReference>
<dbReference type="SUPFAM" id="SSF53681">
    <property type="entry name" value="Aspartate/glutamate racemase"/>
    <property type="match status" value="2"/>
</dbReference>
<dbReference type="PROSITE" id="PS00923">
    <property type="entry name" value="ASP_GLU_RACEMASE_1"/>
    <property type="match status" value="1"/>
</dbReference>
<dbReference type="PROSITE" id="PS00924">
    <property type="entry name" value="ASP_GLU_RACEMASE_2"/>
    <property type="match status" value="1"/>
</dbReference>
<evidence type="ECO:0000255" key="1">
    <source>
        <dbReference type="HAMAP-Rule" id="MF_00258"/>
    </source>
</evidence>
<feature type="chain" id="PRO_1000114069" description="Glutamate racemase">
    <location>
        <begin position="1"/>
        <end position="260"/>
    </location>
</feature>
<feature type="active site" description="Proton donor/acceptor" evidence="1">
    <location>
        <position position="71"/>
    </location>
</feature>
<feature type="active site" description="Proton donor/acceptor" evidence="1">
    <location>
        <position position="182"/>
    </location>
</feature>
<feature type="binding site" evidence="1">
    <location>
        <begin position="7"/>
        <end position="8"/>
    </location>
    <ligand>
        <name>substrate</name>
    </ligand>
</feature>
<feature type="binding site" evidence="1">
    <location>
        <begin position="39"/>
        <end position="40"/>
    </location>
    <ligand>
        <name>substrate</name>
    </ligand>
</feature>
<feature type="binding site" evidence="1">
    <location>
        <begin position="72"/>
        <end position="73"/>
    </location>
    <ligand>
        <name>substrate</name>
    </ligand>
</feature>
<feature type="binding site" evidence="1">
    <location>
        <begin position="183"/>
        <end position="184"/>
    </location>
    <ligand>
        <name>substrate</name>
    </ligand>
</feature>
<accession>B2V9I5</accession>
<gene>
    <name evidence="1" type="primary">murI</name>
    <name type="ordered locus">SYO3AOP1_0987</name>
</gene>
<reference key="1">
    <citation type="journal article" date="2009" name="J. Bacteriol.">
        <title>Complete and draft genome sequences of six members of the Aquificales.</title>
        <authorList>
            <person name="Reysenbach A.-L."/>
            <person name="Hamamura N."/>
            <person name="Podar M."/>
            <person name="Griffiths E."/>
            <person name="Ferreira S."/>
            <person name="Hochstein R."/>
            <person name="Heidelberg J."/>
            <person name="Johnson J."/>
            <person name="Mead D."/>
            <person name="Pohorille A."/>
            <person name="Sarmiento M."/>
            <person name="Schweighofer K."/>
            <person name="Seshadri R."/>
            <person name="Voytek M.A."/>
        </authorList>
    </citation>
    <scope>NUCLEOTIDE SEQUENCE [LARGE SCALE GENOMIC DNA]</scope>
    <source>
        <strain>YO3AOP1</strain>
    </source>
</reference>
<comment type="function">
    <text evidence="1">Provides the (R)-glutamate required for cell wall biosynthesis.</text>
</comment>
<comment type="catalytic activity">
    <reaction evidence="1">
        <text>L-glutamate = D-glutamate</text>
        <dbReference type="Rhea" id="RHEA:12813"/>
        <dbReference type="ChEBI" id="CHEBI:29985"/>
        <dbReference type="ChEBI" id="CHEBI:29986"/>
        <dbReference type="EC" id="5.1.1.3"/>
    </reaction>
</comment>
<comment type="pathway">
    <text evidence="1">Cell wall biogenesis; peptidoglycan biosynthesis.</text>
</comment>
<comment type="similarity">
    <text evidence="1">Belongs to the aspartate/glutamate racemases family.</text>
</comment>
<protein>
    <recommendedName>
        <fullName evidence="1">Glutamate racemase</fullName>
        <ecNumber evidence="1">5.1.1.3</ecNumber>
    </recommendedName>
</protein>
<sequence length="260" mass="28723">MPIGIFDSGIGGLTVFKEIAASFPKVDLYYLGDTARVPYGNKSKTTIIRYSVECASYLYHNYNVDAIVIACNTASSYALDTLREILPIPVIGVVQPGAESAVKVSKNKKIGVIGTSATIKSNSYFETLKSLDKDLEIYQKACPLFVPLVEEGWIDNEVAKLTVKEYLDDLVKTGIDTLILGCTHYPLLKNTIKGLYPHLNIVDSSVAIVEHLKNIKLNIEETGKRKIFITDESHAFDKLKNMLVGDIKTEKIELSDLCSL</sequence>
<organism>
    <name type="scientific">Sulfurihydrogenibium sp. (strain YO3AOP1)</name>
    <dbReference type="NCBI Taxonomy" id="436114"/>
    <lineage>
        <taxon>Bacteria</taxon>
        <taxon>Pseudomonadati</taxon>
        <taxon>Aquificota</taxon>
        <taxon>Aquificia</taxon>
        <taxon>Aquificales</taxon>
        <taxon>Hydrogenothermaceae</taxon>
        <taxon>Sulfurihydrogenibium</taxon>
    </lineage>
</organism>
<proteinExistence type="inferred from homology"/>
<keyword id="KW-0133">Cell shape</keyword>
<keyword id="KW-0961">Cell wall biogenesis/degradation</keyword>
<keyword id="KW-0413">Isomerase</keyword>
<keyword id="KW-0573">Peptidoglycan synthesis</keyword>
<name>MURI_SULSY</name>